<reference key="1">
    <citation type="journal article" date="1993" name="J. Immunol.">
        <title>Characterization of two novel Ly-6 genes. Protein sequence and potential structural similarity to alpha-bungarotoxin and other neurotoxins.</title>
        <authorList>
            <person name="Fleming T.J."/>
            <person name="O'Huigin C."/>
            <person name="Malek T.R."/>
        </authorList>
    </citation>
    <scope>NUCLEOTIDE SEQUENCE [GENOMIC DNA]</scope>
    <source>
        <strain>BALB/cJ</strain>
        <tissue>Liver</tissue>
    </source>
</reference>
<accession>P35460</accession>
<protein>
    <recommendedName>
        <fullName>Lymphocyte antigen 6F</fullName>
        <shortName>Ly-6F</shortName>
    </recommendedName>
    <alternativeName>
        <fullName>Ly-6F.1</fullName>
    </alternativeName>
</protein>
<name>LY6F_MOUSE</name>
<proteinExistence type="inferred from homology"/>
<evidence type="ECO:0000250" key="1"/>
<evidence type="ECO:0000255" key="2"/>
<comment type="subcellular location">
    <subcellularLocation>
        <location evidence="1">Cell membrane</location>
        <topology evidence="1">Lipid-anchor</topology>
        <topology evidence="1">GPI-anchor</topology>
    </subcellularLocation>
</comment>
<sequence length="134" mass="14599">MDSCHTTKSCVLILLVVLLCAERAQGLECYNCLGVSLGIACKSITCPYPDAVCISQQVELIVDSQRRKVKNKLCFPFCPANLENMEILGTTVNVNTSCCKEDLCNAPFSTGGSTWTMTRVLLLNLGSVFLQTLL</sequence>
<feature type="signal peptide" evidence="2">
    <location>
        <begin position="1"/>
        <end position="26"/>
    </location>
</feature>
<feature type="chain" id="PRO_0000036144" description="Lymphocyte antigen 6F">
    <location>
        <begin position="27"/>
        <end position="112"/>
    </location>
</feature>
<feature type="propeptide" id="PRO_0000036145" description="Removed in mature form" evidence="2">
    <location>
        <begin position="113"/>
        <end position="134"/>
    </location>
</feature>
<feature type="domain" description="UPAR/Ly6">
    <location>
        <begin position="27"/>
        <end position="119"/>
    </location>
</feature>
<feature type="lipid moiety-binding region" description="GPI-anchor amidated glycine" evidence="2">
    <location>
        <position position="112"/>
    </location>
</feature>
<feature type="disulfide bond" evidence="1">
    <location>
        <begin position="29"/>
        <end position="53"/>
    </location>
</feature>
<feature type="disulfide bond" evidence="1">
    <location>
        <begin position="32"/>
        <end position="41"/>
    </location>
</feature>
<feature type="disulfide bond" evidence="1">
    <location>
        <begin position="46"/>
        <end position="74"/>
    </location>
</feature>
<feature type="disulfide bond" evidence="1">
    <location>
        <begin position="78"/>
        <end position="98"/>
    </location>
</feature>
<feature type="disulfide bond" evidence="1">
    <location>
        <begin position="99"/>
        <end position="104"/>
    </location>
</feature>
<organism>
    <name type="scientific">Mus musculus</name>
    <name type="common">Mouse</name>
    <dbReference type="NCBI Taxonomy" id="10090"/>
    <lineage>
        <taxon>Eukaryota</taxon>
        <taxon>Metazoa</taxon>
        <taxon>Chordata</taxon>
        <taxon>Craniata</taxon>
        <taxon>Vertebrata</taxon>
        <taxon>Euteleostomi</taxon>
        <taxon>Mammalia</taxon>
        <taxon>Eutheria</taxon>
        <taxon>Euarchontoglires</taxon>
        <taxon>Glires</taxon>
        <taxon>Rodentia</taxon>
        <taxon>Myomorpha</taxon>
        <taxon>Muroidea</taxon>
        <taxon>Muridae</taxon>
        <taxon>Murinae</taxon>
        <taxon>Mus</taxon>
        <taxon>Mus</taxon>
    </lineage>
</organism>
<dbReference type="EMBL" id="X70922">
    <property type="protein sequence ID" value="CAA50270.1"/>
    <property type="molecule type" value="Genomic_DNA"/>
</dbReference>
<dbReference type="EMBL" id="X70918">
    <property type="protein sequence ID" value="CAA50270.1"/>
    <property type="status" value="JOINED"/>
    <property type="molecule type" value="Genomic_DNA"/>
</dbReference>
<dbReference type="EMBL" id="X70919">
    <property type="protein sequence ID" value="CAA50270.1"/>
    <property type="status" value="JOINED"/>
    <property type="molecule type" value="Genomic_DNA"/>
</dbReference>
<dbReference type="CCDS" id="CCDS27543.1"/>
<dbReference type="PIR" id="I48639">
    <property type="entry name" value="I48639"/>
</dbReference>
<dbReference type="RefSeq" id="NP_032556.1">
    <property type="nucleotide sequence ID" value="NM_008530.2"/>
</dbReference>
<dbReference type="RefSeq" id="XP_006520585.1">
    <property type="nucleotide sequence ID" value="XM_006520522.3"/>
</dbReference>
<dbReference type="FunCoup" id="P35460">
    <property type="interactions" value="187"/>
</dbReference>
<dbReference type="STRING" id="10090.ENSMUSP00000023247"/>
<dbReference type="PaxDb" id="10090-ENSMUSP00000023247"/>
<dbReference type="DNASU" id="17071"/>
<dbReference type="Ensembl" id="ENSMUST00000023247.13">
    <property type="protein sequence ID" value="ENSMUSP00000023247.7"/>
    <property type="gene ID" value="ENSMUSG00000022583.13"/>
</dbReference>
<dbReference type="Ensembl" id="ENSMUST00000189654.2">
    <property type="protein sequence ID" value="ENSMUSP00000140899.2"/>
    <property type="gene ID" value="ENSMUSG00000022583.13"/>
</dbReference>
<dbReference type="GeneID" id="17071"/>
<dbReference type="KEGG" id="mmu:17071"/>
<dbReference type="UCSC" id="uc007wgs.1">
    <property type="organism name" value="mouse"/>
</dbReference>
<dbReference type="AGR" id="MGI:109441"/>
<dbReference type="CTD" id="17071"/>
<dbReference type="MGI" id="MGI:109441">
    <property type="gene designation" value="Ly6f"/>
</dbReference>
<dbReference type="VEuPathDB" id="HostDB:ENSMUSG00000022583"/>
<dbReference type="eggNOG" id="ENOG502TD4F">
    <property type="taxonomic scope" value="Eukaryota"/>
</dbReference>
<dbReference type="GeneTree" id="ENSGT00940000154560"/>
<dbReference type="HOGENOM" id="CLU_106772_0_0_1"/>
<dbReference type="InParanoid" id="P35460"/>
<dbReference type="OMA" id="HVNTDCC"/>
<dbReference type="OrthoDB" id="9624109at2759"/>
<dbReference type="PhylomeDB" id="P35460"/>
<dbReference type="TreeFam" id="TF337757"/>
<dbReference type="BioGRID-ORCS" id="17071">
    <property type="hits" value="2 hits in 77 CRISPR screens"/>
</dbReference>
<dbReference type="PRO" id="PR:P35460"/>
<dbReference type="Proteomes" id="UP000000589">
    <property type="component" value="Chromosome 15"/>
</dbReference>
<dbReference type="RNAct" id="P35460">
    <property type="molecule type" value="protein"/>
</dbReference>
<dbReference type="Bgee" id="ENSMUSG00000022583">
    <property type="expression patterns" value="Expressed in parotid gland and 26 other cell types or tissues"/>
</dbReference>
<dbReference type="GO" id="GO:0005886">
    <property type="term" value="C:plasma membrane"/>
    <property type="evidence" value="ECO:0007669"/>
    <property type="project" value="UniProtKB-SubCell"/>
</dbReference>
<dbReference type="GO" id="GO:0098552">
    <property type="term" value="C:side of membrane"/>
    <property type="evidence" value="ECO:0007669"/>
    <property type="project" value="UniProtKB-KW"/>
</dbReference>
<dbReference type="CDD" id="cd23541">
    <property type="entry name" value="TFP_LU_ECD_Ly6A_like"/>
    <property type="match status" value="1"/>
</dbReference>
<dbReference type="FunFam" id="2.10.60.10:FF:000003">
    <property type="entry name" value="lymphocyte antigen 6E isoform X1"/>
    <property type="match status" value="1"/>
</dbReference>
<dbReference type="Gene3D" id="2.10.60.10">
    <property type="entry name" value="CD59"/>
    <property type="match status" value="1"/>
</dbReference>
<dbReference type="InterPro" id="IPR018363">
    <property type="entry name" value="CD59_antigen_CS"/>
</dbReference>
<dbReference type="InterPro" id="IPR016054">
    <property type="entry name" value="LY6_UPA_recep-like"/>
</dbReference>
<dbReference type="InterPro" id="IPR051445">
    <property type="entry name" value="LY6H/LY6L_nAChR_modulators"/>
</dbReference>
<dbReference type="InterPro" id="IPR045860">
    <property type="entry name" value="Snake_toxin-like_sf"/>
</dbReference>
<dbReference type="PANTHER" id="PTHR32217">
    <property type="entry name" value="LYMPHOCYTE ANTIGEN 6H"/>
    <property type="match status" value="1"/>
</dbReference>
<dbReference type="PANTHER" id="PTHR32217:SF3">
    <property type="entry name" value="LYMPHOCYTE ANTIGEN 6S"/>
    <property type="match status" value="1"/>
</dbReference>
<dbReference type="Pfam" id="PF00021">
    <property type="entry name" value="UPAR_LY6"/>
    <property type="match status" value="1"/>
</dbReference>
<dbReference type="SMART" id="SM00134">
    <property type="entry name" value="LU"/>
    <property type="match status" value="1"/>
</dbReference>
<dbReference type="SUPFAM" id="SSF57302">
    <property type="entry name" value="Snake toxin-like"/>
    <property type="match status" value="1"/>
</dbReference>
<dbReference type="PROSITE" id="PS00983">
    <property type="entry name" value="LY6_UPAR"/>
    <property type="match status" value="1"/>
</dbReference>
<gene>
    <name type="primary">Ly6f</name>
</gene>
<keyword id="KW-1003">Cell membrane</keyword>
<keyword id="KW-1015">Disulfide bond</keyword>
<keyword id="KW-0325">Glycoprotein</keyword>
<keyword id="KW-0336">GPI-anchor</keyword>
<keyword id="KW-0449">Lipoprotein</keyword>
<keyword id="KW-0472">Membrane</keyword>
<keyword id="KW-1185">Reference proteome</keyword>
<keyword id="KW-0732">Signal</keyword>